<geneLocation type="mitochondrion"/>
<feature type="chain" id="PRO_0000183515" description="Cytochrome c oxidase subunit 2">
    <location>
        <begin position="1"/>
        <end position="227"/>
    </location>
</feature>
<feature type="topological domain" description="Mitochondrial intermembrane" evidence="5">
    <location>
        <begin position="1"/>
        <end position="14"/>
    </location>
</feature>
<feature type="transmembrane region" description="Helical; Name=I" evidence="5">
    <location>
        <begin position="15"/>
        <end position="45"/>
    </location>
</feature>
<feature type="topological domain" description="Mitochondrial matrix" evidence="5">
    <location>
        <begin position="46"/>
        <end position="59"/>
    </location>
</feature>
<feature type="transmembrane region" description="Helical; Name=II" evidence="5">
    <location>
        <begin position="60"/>
        <end position="87"/>
    </location>
</feature>
<feature type="topological domain" description="Mitochondrial intermembrane" evidence="5">
    <location>
        <begin position="88"/>
        <end position="227"/>
    </location>
</feature>
<feature type="binding site" evidence="5">
    <location>
        <position position="161"/>
    </location>
    <ligand>
        <name>Cu cation</name>
        <dbReference type="ChEBI" id="CHEBI:23378"/>
        <label>A1</label>
    </ligand>
</feature>
<feature type="binding site" evidence="5">
    <location>
        <position position="196"/>
    </location>
    <ligand>
        <name>Cu cation</name>
        <dbReference type="ChEBI" id="CHEBI:23378"/>
        <label>A1</label>
    </ligand>
</feature>
<feature type="binding site" evidence="5">
    <location>
        <position position="196"/>
    </location>
    <ligand>
        <name>Cu cation</name>
        <dbReference type="ChEBI" id="CHEBI:23378"/>
        <label>A2</label>
    </ligand>
</feature>
<feature type="binding site" evidence="5">
    <location>
        <position position="198"/>
    </location>
    <ligand>
        <name>Cu cation</name>
        <dbReference type="ChEBI" id="CHEBI:23378"/>
        <label>A2</label>
    </ligand>
</feature>
<feature type="binding site" evidence="5">
    <location>
        <position position="198"/>
    </location>
    <ligand>
        <name>Mg(2+)</name>
        <dbReference type="ChEBI" id="CHEBI:18420"/>
        <note>ligand shared with MT-CO1</note>
    </ligand>
</feature>
<feature type="binding site" evidence="5">
    <location>
        <position position="200"/>
    </location>
    <ligand>
        <name>Cu cation</name>
        <dbReference type="ChEBI" id="CHEBI:23378"/>
        <label>A1</label>
    </ligand>
</feature>
<feature type="binding site" evidence="5">
    <location>
        <position position="200"/>
    </location>
    <ligand>
        <name>Cu cation</name>
        <dbReference type="ChEBI" id="CHEBI:23378"/>
        <label>A2</label>
    </ligand>
</feature>
<feature type="binding site" evidence="5">
    <location>
        <position position="204"/>
    </location>
    <ligand>
        <name>Cu cation</name>
        <dbReference type="ChEBI" id="CHEBI:23378"/>
        <label>A2</label>
    </ligand>
</feature>
<feature type="binding site" evidence="5">
    <location>
        <position position="207"/>
    </location>
    <ligand>
        <name>Cu cation</name>
        <dbReference type="ChEBI" id="CHEBI:23378"/>
        <label>A1</label>
    </ligand>
</feature>
<feature type="modified residue" description="N-formylmethionine" evidence="1">
    <location>
        <position position="1"/>
    </location>
</feature>
<feature type="modified residue" description="Phosphotyrosine" evidence="3">
    <location>
        <position position="218"/>
    </location>
</feature>
<feature type="sequence conflict" description="In Ref. 2; AAU89109." evidence="6" ref="2">
    <original>T</original>
    <variation>A</variation>
    <location>
        <position position="99"/>
    </location>
</feature>
<feature type="sequence conflict" description="In Ref. 2; AAU89109." evidence="6" ref="2">
    <original>V</original>
    <variation>D</variation>
    <location>
        <position position="154"/>
    </location>
</feature>
<feature type="sequence conflict" description="In Ref. 2; AAU89109." evidence="6" ref="2">
    <original>S</original>
    <variation>T</variation>
    <location>
        <position position="187"/>
    </location>
</feature>
<dbReference type="EC" id="7.1.1.9"/>
<dbReference type="EMBL" id="U18819">
    <property type="protein sequence ID" value="AAA75606.1"/>
    <property type="molecule type" value="Genomic_DNA"/>
</dbReference>
<dbReference type="EMBL" id="AY684273">
    <property type="protein sequence ID" value="AAU89109.1"/>
    <property type="molecule type" value="Genomic_DNA"/>
</dbReference>
<dbReference type="SMR" id="P68554"/>
<dbReference type="Proteomes" id="UP000694520">
    <property type="component" value="Unplaced"/>
</dbReference>
<dbReference type="GO" id="GO:0005743">
    <property type="term" value="C:mitochondrial inner membrane"/>
    <property type="evidence" value="ECO:0007669"/>
    <property type="project" value="UniProtKB-SubCell"/>
</dbReference>
<dbReference type="GO" id="GO:0045277">
    <property type="term" value="C:respiratory chain complex IV"/>
    <property type="evidence" value="ECO:0000250"/>
    <property type="project" value="UniProtKB"/>
</dbReference>
<dbReference type="GO" id="GO:0005507">
    <property type="term" value="F:copper ion binding"/>
    <property type="evidence" value="ECO:0007669"/>
    <property type="project" value="InterPro"/>
</dbReference>
<dbReference type="GO" id="GO:0004129">
    <property type="term" value="F:cytochrome-c oxidase activity"/>
    <property type="evidence" value="ECO:0007669"/>
    <property type="project" value="UniProtKB-EC"/>
</dbReference>
<dbReference type="GO" id="GO:0042773">
    <property type="term" value="P:ATP synthesis coupled electron transport"/>
    <property type="evidence" value="ECO:0007669"/>
    <property type="project" value="TreeGrafter"/>
</dbReference>
<dbReference type="CDD" id="cd13912">
    <property type="entry name" value="CcO_II_C"/>
    <property type="match status" value="1"/>
</dbReference>
<dbReference type="FunFam" id="1.10.287.90:FF:000001">
    <property type="entry name" value="Cytochrome c oxidase subunit 2"/>
    <property type="match status" value="1"/>
</dbReference>
<dbReference type="FunFam" id="2.60.40.420:FF:000001">
    <property type="entry name" value="Cytochrome c oxidase subunit 2"/>
    <property type="match status" value="1"/>
</dbReference>
<dbReference type="Gene3D" id="1.10.287.90">
    <property type="match status" value="1"/>
</dbReference>
<dbReference type="Gene3D" id="2.60.40.420">
    <property type="entry name" value="Cupredoxins - blue copper proteins"/>
    <property type="match status" value="1"/>
</dbReference>
<dbReference type="InterPro" id="IPR045187">
    <property type="entry name" value="CcO_II"/>
</dbReference>
<dbReference type="InterPro" id="IPR002429">
    <property type="entry name" value="CcO_II-like_C"/>
</dbReference>
<dbReference type="InterPro" id="IPR034210">
    <property type="entry name" value="CcO_II_C"/>
</dbReference>
<dbReference type="InterPro" id="IPR001505">
    <property type="entry name" value="Copper_CuA"/>
</dbReference>
<dbReference type="InterPro" id="IPR008972">
    <property type="entry name" value="Cupredoxin"/>
</dbReference>
<dbReference type="InterPro" id="IPR014222">
    <property type="entry name" value="Cyt_c_oxidase_su2"/>
</dbReference>
<dbReference type="InterPro" id="IPR011759">
    <property type="entry name" value="Cyt_c_oxidase_su2_TM_dom"/>
</dbReference>
<dbReference type="InterPro" id="IPR036257">
    <property type="entry name" value="Cyt_c_oxidase_su2_TM_sf"/>
</dbReference>
<dbReference type="NCBIfam" id="TIGR02866">
    <property type="entry name" value="CoxB"/>
    <property type="match status" value="1"/>
</dbReference>
<dbReference type="PANTHER" id="PTHR22888:SF9">
    <property type="entry name" value="CYTOCHROME C OXIDASE SUBUNIT 2"/>
    <property type="match status" value="1"/>
</dbReference>
<dbReference type="PANTHER" id="PTHR22888">
    <property type="entry name" value="CYTOCHROME C OXIDASE, SUBUNIT II"/>
    <property type="match status" value="1"/>
</dbReference>
<dbReference type="Pfam" id="PF00116">
    <property type="entry name" value="COX2"/>
    <property type="match status" value="1"/>
</dbReference>
<dbReference type="Pfam" id="PF02790">
    <property type="entry name" value="COX2_TM"/>
    <property type="match status" value="1"/>
</dbReference>
<dbReference type="PRINTS" id="PR01166">
    <property type="entry name" value="CYCOXIDASEII"/>
</dbReference>
<dbReference type="SUPFAM" id="SSF49503">
    <property type="entry name" value="Cupredoxins"/>
    <property type="match status" value="1"/>
</dbReference>
<dbReference type="SUPFAM" id="SSF81464">
    <property type="entry name" value="Cytochrome c oxidase subunit II-like, transmembrane region"/>
    <property type="match status" value="1"/>
</dbReference>
<dbReference type="PROSITE" id="PS00078">
    <property type="entry name" value="COX2"/>
    <property type="match status" value="1"/>
</dbReference>
<dbReference type="PROSITE" id="PS50857">
    <property type="entry name" value="COX2_CUA"/>
    <property type="match status" value="1"/>
</dbReference>
<dbReference type="PROSITE" id="PS50999">
    <property type="entry name" value="COX2_TM"/>
    <property type="match status" value="1"/>
</dbReference>
<name>COX2_BOSMU</name>
<gene>
    <name type="primary">MT-CO2</name>
    <name type="synonym">COII</name>
    <name type="synonym">COX2</name>
    <name type="synonym">COXII</name>
    <name type="synonym">MTCO2</name>
</gene>
<organism>
    <name type="scientific">Bos mutus grunniens</name>
    <name type="common">Wild yak</name>
    <name type="synonym">Bos grunniens</name>
    <dbReference type="NCBI Taxonomy" id="30521"/>
    <lineage>
        <taxon>Eukaryota</taxon>
        <taxon>Metazoa</taxon>
        <taxon>Chordata</taxon>
        <taxon>Craniata</taxon>
        <taxon>Vertebrata</taxon>
        <taxon>Euteleostomi</taxon>
        <taxon>Mammalia</taxon>
        <taxon>Eutheria</taxon>
        <taxon>Laurasiatheria</taxon>
        <taxon>Artiodactyla</taxon>
        <taxon>Ruminantia</taxon>
        <taxon>Pecora</taxon>
        <taxon>Bovidae</taxon>
        <taxon>Bovinae</taxon>
        <taxon>Bos</taxon>
    </lineage>
</organism>
<proteinExistence type="inferred from homology"/>
<sequence length="227" mass="26021">MAYPMQLGFQDATSPIMEELLHFHDHTLMIVFLISSLVLYIISLMLTTKLTHTSTMDAQEVETIWTILPAIILILIALPSLRILYMMDEINNPSLTVKTMGHQWYWSYEYTDYEDLSFDSYMIPTSELKPGELRLLEVDNRVVLPMEMTIRMLVSSEDVLHSWAVPSLGLKTDAIPGRLNQTTLMSSRPGLYYGQCSEICGSNHSFMPIVLELVPLKYFEKWSASML</sequence>
<reference key="1">
    <citation type="journal article" date="1995" name="J. Mol. Evol.">
        <title>Mammalian mitochondrial DNA evolution: a comparison of the cytochrome b and cytochrome c oxidase II genes.</title>
        <authorList>
            <person name="Honeycutt R.L."/>
            <person name="Nedbal M.A."/>
            <person name="Adkins R.M."/>
            <person name="Janecek L.L."/>
        </authorList>
    </citation>
    <scope>NUCLEOTIDE SEQUENCE [GENOMIC DNA]</scope>
</reference>
<reference key="2">
    <citation type="submission" date="2004-10" db="EMBL/GenBank/DDBJ databases">
        <title>Complete sequence of the Yak (Bos grunniens.) mitochondrial genome and its genetic relationship with related species.</title>
        <authorList>
            <person name="Gu Z."/>
            <person name="Zhao X."/>
            <person name="Li N."/>
            <person name="Wu C."/>
        </authorList>
    </citation>
    <scope>NUCLEOTIDE SEQUENCE [GENOMIC DNA]</scope>
</reference>
<protein>
    <recommendedName>
        <fullName>Cytochrome c oxidase subunit 2</fullName>
        <ecNumber>7.1.1.9</ecNumber>
    </recommendedName>
    <alternativeName>
        <fullName>Cytochrome c oxidase polypeptide II</fullName>
    </alternativeName>
</protein>
<evidence type="ECO:0000250" key="1"/>
<evidence type="ECO:0000250" key="2">
    <source>
        <dbReference type="UniProtKB" id="P00403"/>
    </source>
</evidence>
<evidence type="ECO:0000250" key="3">
    <source>
        <dbReference type="UniProtKB" id="P00406"/>
    </source>
</evidence>
<evidence type="ECO:0000250" key="4">
    <source>
        <dbReference type="UniProtKB" id="P00410"/>
    </source>
</evidence>
<evidence type="ECO:0000250" key="5">
    <source>
        <dbReference type="UniProtKB" id="P68530"/>
    </source>
</evidence>
<evidence type="ECO:0000305" key="6"/>
<accession>P68554</accession>
<accession>P00404</accession>
<accession>Q5Y4Q7</accession>
<keyword id="KW-0186">Copper</keyword>
<keyword id="KW-0249">Electron transport</keyword>
<keyword id="KW-0291">Formylation</keyword>
<keyword id="KW-0460">Magnesium</keyword>
<keyword id="KW-0472">Membrane</keyword>
<keyword id="KW-0479">Metal-binding</keyword>
<keyword id="KW-0496">Mitochondrion</keyword>
<keyword id="KW-0999">Mitochondrion inner membrane</keyword>
<keyword id="KW-0597">Phosphoprotein</keyword>
<keyword id="KW-1185">Reference proteome</keyword>
<keyword id="KW-0679">Respiratory chain</keyword>
<keyword id="KW-1278">Translocase</keyword>
<keyword id="KW-0812">Transmembrane</keyword>
<keyword id="KW-1133">Transmembrane helix</keyword>
<keyword id="KW-0813">Transport</keyword>
<comment type="function">
    <text evidence="4">Component of the cytochrome c oxidase, the last enzyme in the mitochondrial electron transport chain which drives oxidative phosphorylation. The respiratory chain contains 3 multisubunit complexes succinate dehydrogenase (complex II, CII), ubiquinol-cytochrome c oxidoreductase (cytochrome b-c1 complex, complex III, CIII) and cytochrome c oxidase (complex IV, CIV), that cooperate to transfer electrons derived from NADH and succinate to molecular oxygen, creating an electrochemical gradient over the inner membrane that drives transmembrane transport and the ATP synthase. Cytochrome c oxidase is the component of the respiratory chain that catalyzes the reduction of oxygen to water. Electrons originating from reduced cytochrome c in the intermembrane space (IMS) are transferred via the dinuclear copper A center (CU(A)) of subunit 2 and heme A of subunit 1 to the active site in subunit 1, a binuclear center (BNC) formed by heme A3 and copper B (CU(B)). The BNC reduces molecular oxygen to 2 water molecules using 4 electrons from cytochrome c in the IMS and 4 protons from the mitochondrial matrix.</text>
</comment>
<comment type="catalytic activity">
    <reaction evidence="4">
        <text>4 Fe(II)-[cytochrome c] + O2 + 8 H(+)(in) = 4 Fe(III)-[cytochrome c] + 2 H2O + 4 H(+)(out)</text>
        <dbReference type="Rhea" id="RHEA:11436"/>
        <dbReference type="Rhea" id="RHEA-COMP:10350"/>
        <dbReference type="Rhea" id="RHEA-COMP:14399"/>
        <dbReference type="ChEBI" id="CHEBI:15377"/>
        <dbReference type="ChEBI" id="CHEBI:15378"/>
        <dbReference type="ChEBI" id="CHEBI:15379"/>
        <dbReference type="ChEBI" id="CHEBI:29033"/>
        <dbReference type="ChEBI" id="CHEBI:29034"/>
        <dbReference type="EC" id="7.1.1.9"/>
    </reaction>
    <physiologicalReaction direction="left-to-right" evidence="4">
        <dbReference type="Rhea" id="RHEA:11437"/>
    </physiologicalReaction>
</comment>
<comment type="cofactor">
    <cofactor evidence="5">
        <name>Cu cation</name>
        <dbReference type="ChEBI" id="CHEBI:23378"/>
    </cofactor>
    <text evidence="5">Binds a dinuclear copper A center per subunit.</text>
</comment>
<comment type="subunit">
    <text evidence="2 5">Component of the cytochrome c oxidase (complex IV, CIV), a multisubunit enzyme composed of 14 subunits. The complex is composed of a catalytic core of 3 subunits MT-CO1, MT-CO2 and MT-CO3, encoded in the mitochondrial DNA, and 11 supernumerary subunits COX4I, COX5A, COX5B, COX6A, COX6B, COX6C, COX7A, COX7B, COX7C, COX8 and NDUFA4, which are encoded in the nuclear genome. The complex exists as a monomer or a dimer and forms supercomplexes (SCs) in the inner mitochondrial membrane with NADH-ubiquinone oxidoreductase (complex I, CI) and ubiquinol-cytochrome c oxidoreductase (cytochrome b-c1 complex, complex III, CIII), resulting in different assemblies (supercomplex SCI(1)III(2)IV(1) and megacomplex MCI(2)III(2)IV(2)) (By similarity). Found in a complex with TMEM177, COA6, COX18, COX20, SCO1 and SCO2. Interacts with TMEM177 in a COX20-dependent manner. Interacts with COX20. Interacts with COX16 (By similarity).</text>
</comment>
<comment type="subcellular location">
    <subcellularLocation>
        <location evidence="5">Mitochondrion inner membrane</location>
        <topology evidence="5">Multi-pass membrane protein</topology>
    </subcellularLocation>
</comment>
<comment type="similarity">
    <text evidence="6">Belongs to the cytochrome c oxidase subunit 2 family.</text>
</comment>